<accession>Q39DJ5</accession>
<evidence type="ECO:0000255" key="1">
    <source>
        <dbReference type="HAMAP-Rule" id="MF_01187"/>
    </source>
</evidence>
<reference key="1">
    <citation type="submission" date="2005-10" db="EMBL/GenBank/DDBJ databases">
        <title>Complete sequence of chromosome 1 of Burkholderia sp. 383.</title>
        <authorList>
            <consortium name="US DOE Joint Genome Institute"/>
            <person name="Copeland A."/>
            <person name="Lucas S."/>
            <person name="Lapidus A."/>
            <person name="Barry K."/>
            <person name="Detter J.C."/>
            <person name="Glavina T."/>
            <person name="Hammon N."/>
            <person name="Israni S."/>
            <person name="Pitluck S."/>
            <person name="Chain P."/>
            <person name="Malfatti S."/>
            <person name="Shin M."/>
            <person name="Vergez L."/>
            <person name="Schmutz J."/>
            <person name="Larimer F."/>
            <person name="Land M."/>
            <person name="Kyrpides N."/>
            <person name="Lykidis A."/>
            <person name="Richardson P."/>
        </authorList>
    </citation>
    <scope>NUCLEOTIDE SEQUENCE [LARGE SCALE GENOMIC DNA]</scope>
    <source>
        <strain>ATCC 17760 / DSM 23089 / LMG 22485 / NCIMB 9086 / R18194 / 383</strain>
    </source>
</reference>
<sequence>MDARLLEILVCPICKGPLHYDRAAQELICNADKLAYPIRDGIPVMLVDEARQTVEGTPVDPAGR</sequence>
<comment type="similarity">
    <text evidence="1">Belongs to the UPF0434 family.</text>
</comment>
<dbReference type="EMBL" id="CP000151">
    <property type="protein sequence ID" value="ABB09471.1"/>
    <property type="molecule type" value="Genomic_DNA"/>
</dbReference>
<dbReference type="RefSeq" id="WP_010090898.1">
    <property type="nucleotide sequence ID" value="NZ_WNDV01000039.1"/>
</dbReference>
<dbReference type="SMR" id="Q39DJ5"/>
<dbReference type="KEGG" id="bur:Bcep18194_A5877"/>
<dbReference type="HOGENOM" id="CLU_155659_3_0_4"/>
<dbReference type="Proteomes" id="UP000002705">
    <property type="component" value="Chromosome 1"/>
</dbReference>
<dbReference type="GO" id="GO:0005829">
    <property type="term" value="C:cytosol"/>
    <property type="evidence" value="ECO:0007669"/>
    <property type="project" value="TreeGrafter"/>
</dbReference>
<dbReference type="FunFam" id="2.20.25.10:FF:000002">
    <property type="entry name" value="UPF0434 protein YcaR"/>
    <property type="match status" value="1"/>
</dbReference>
<dbReference type="Gene3D" id="2.20.25.10">
    <property type="match status" value="1"/>
</dbReference>
<dbReference type="HAMAP" id="MF_01187">
    <property type="entry name" value="UPF0434"/>
    <property type="match status" value="1"/>
</dbReference>
<dbReference type="InterPro" id="IPR005651">
    <property type="entry name" value="Trm112-like"/>
</dbReference>
<dbReference type="PANTHER" id="PTHR33505:SF4">
    <property type="entry name" value="PROTEIN PREY, MITOCHONDRIAL"/>
    <property type="match status" value="1"/>
</dbReference>
<dbReference type="PANTHER" id="PTHR33505">
    <property type="entry name" value="ZGC:162634"/>
    <property type="match status" value="1"/>
</dbReference>
<dbReference type="Pfam" id="PF03966">
    <property type="entry name" value="Trm112p"/>
    <property type="match status" value="1"/>
</dbReference>
<dbReference type="SUPFAM" id="SSF158997">
    <property type="entry name" value="Trm112p-like"/>
    <property type="match status" value="1"/>
</dbReference>
<feature type="chain" id="PRO_0000291077" description="UPF0434 protein Bcep18194_A5877">
    <location>
        <begin position="1"/>
        <end position="64"/>
    </location>
</feature>
<proteinExistence type="inferred from homology"/>
<organism>
    <name type="scientific">Burkholderia lata (strain ATCC 17760 / DSM 23089 / LMG 22485 / NCIMB 9086 / R18194 / 383)</name>
    <dbReference type="NCBI Taxonomy" id="482957"/>
    <lineage>
        <taxon>Bacteria</taxon>
        <taxon>Pseudomonadati</taxon>
        <taxon>Pseudomonadota</taxon>
        <taxon>Betaproteobacteria</taxon>
        <taxon>Burkholderiales</taxon>
        <taxon>Burkholderiaceae</taxon>
        <taxon>Burkholderia</taxon>
        <taxon>Burkholderia cepacia complex</taxon>
    </lineage>
</organism>
<gene>
    <name type="ordered locus">Bcep18194_A5877</name>
</gene>
<name>Y5877_BURL3</name>
<protein>
    <recommendedName>
        <fullName evidence="1">UPF0434 protein Bcep18194_A5877</fullName>
    </recommendedName>
</protein>